<proteinExistence type="inferred from homology"/>
<name>CEDA_ECOUT</name>
<keyword id="KW-0131">Cell cycle</keyword>
<keyword id="KW-0132">Cell division</keyword>
<keyword id="KW-0238">DNA-binding</keyword>
<accession>Q1RB64</accession>
<feature type="chain" id="PRO_0000300209" description="Cell division activator CedA">
    <location>
        <begin position="1"/>
        <end position="80"/>
    </location>
</feature>
<reference key="1">
    <citation type="journal article" date="2006" name="Proc. Natl. Acad. Sci. U.S.A.">
        <title>Identification of genes subject to positive selection in uropathogenic strains of Escherichia coli: a comparative genomics approach.</title>
        <authorList>
            <person name="Chen S.L."/>
            <person name="Hung C.-S."/>
            <person name="Xu J."/>
            <person name="Reigstad C.S."/>
            <person name="Magrini V."/>
            <person name="Sabo A."/>
            <person name="Blasiar D."/>
            <person name="Bieri T."/>
            <person name="Meyer R.R."/>
            <person name="Ozersky P."/>
            <person name="Armstrong J.R."/>
            <person name="Fulton R.S."/>
            <person name="Latreille J.P."/>
            <person name="Spieth J."/>
            <person name="Hooton T.M."/>
            <person name="Mardis E.R."/>
            <person name="Hultgren S.J."/>
            <person name="Gordon J.I."/>
        </authorList>
    </citation>
    <scope>NUCLEOTIDE SEQUENCE [LARGE SCALE GENOMIC DNA]</scope>
    <source>
        <strain>UTI89 / UPEC</strain>
    </source>
</reference>
<dbReference type="EMBL" id="CP000243">
    <property type="protein sequence ID" value="ABE07400.1"/>
    <property type="status" value="ALT_INIT"/>
    <property type="molecule type" value="Genomic_DNA"/>
</dbReference>
<dbReference type="SMR" id="Q1RB64"/>
<dbReference type="KEGG" id="eci:UTI89_C1924"/>
<dbReference type="HOGENOM" id="CLU_167445_0_0_6"/>
<dbReference type="Proteomes" id="UP000001952">
    <property type="component" value="Chromosome"/>
</dbReference>
<dbReference type="GO" id="GO:0003677">
    <property type="term" value="F:DNA binding"/>
    <property type="evidence" value="ECO:0007669"/>
    <property type="project" value="UniProtKB-UniRule"/>
</dbReference>
<dbReference type="GO" id="GO:0051301">
    <property type="term" value="P:cell division"/>
    <property type="evidence" value="ECO:0007669"/>
    <property type="project" value="UniProtKB-UniRule"/>
</dbReference>
<dbReference type="Gene3D" id="3.30.730.20">
    <property type="entry name" value="Cell division activator CedA"/>
    <property type="match status" value="1"/>
</dbReference>
<dbReference type="HAMAP" id="MF_01580">
    <property type="entry name" value="CedA"/>
    <property type="match status" value="1"/>
</dbReference>
<dbReference type="InterPro" id="IPR038463">
    <property type="entry name" value="CedA-like_sf"/>
</dbReference>
<dbReference type="InterPro" id="IPR019666">
    <property type="entry name" value="Cell_div_activator_CedA"/>
</dbReference>
<dbReference type="NCBIfam" id="NF007510">
    <property type="entry name" value="PRK10113.1"/>
    <property type="match status" value="1"/>
</dbReference>
<dbReference type="Pfam" id="PF10729">
    <property type="entry name" value="CedA"/>
    <property type="match status" value="1"/>
</dbReference>
<evidence type="ECO:0000255" key="1">
    <source>
        <dbReference type="HAMAP-Rule" id="MF_01580"/>
    </source>
</evidence>
<evidence type="ECO:0000305" key="2"/>
<sequence length="80" mass="9462">MKKPLRQQNRQIISYVPRTEPAPPEHAIKMDSFRDVWMLRGKYVAFVLMGESFLRSPAFTVPESAQRWANQIRQENEVEE</sequence>
<comment type="function">
    <text evidence="1">Activates the cell division inhibited by chromosomal DNA over-replication.</text>
</comment>
<comment type="similarity">
    <text evidence="1">Belongs to the CedA family.</text>
</comment>
<comment type="sequence caution" evidence="2">
    <conflict type="erroneous initiation">
        <sequence resource="EMBL-CDS" id="ABE07400"/>
    </conflict>
</comment>
<organism>
    <name type="scientific">Escherichia coli (strain UTI89 / UPEC)</name>
    <dbReference type="NCBI Taxonomy" id="364106"/>
    <lineage>
        <taxon>Bacteria</taxon>
        <taxon>Pseudomonadati</taxon>
        <taxon>Pseudomonadota</taxon>
        <taxon>Gammaproteobacteria</taxon>
        <taxon>Enterobacterales</taxon>
        <taxon>Enterobacteriaceae</taxon>
        <taxon>Escherichia</taxon>
    </lineage>
</organism>
<gene>
    <name evidence="1" type="primary">cedA</name>
    <name type="ordered locus">UTI89_C1924</name>
</gene>
<protein>
    <recommendedName>
        <fullName evidence="1">Cell division activator CedA</fullName>
    </recommendedName>
</protein>